<organism>
    <name type="scientific">Histophilus somni (strain 2336)</name>
    <name type="common">Haemophilus somnus</name>
    <dbReference type="NCBI Taxonomy" id="228400"/>
    <lineage>
        <taxon>Bacteria</taxon>
        <taxon>Pseudomonadati</taxon>
        <taxon>Pseudomonadota</taxon>
        <taxon>Gammaproteobacteria</taxon>
        <taxon>Pasteurellales</taxon>
        <taxon>Pasteurellaceae</taxon>
        <taxon>Histophilus</taxon>
    </lineage>
</organism>
<sequence>MANIKSAKKRAVQSEKRRQHNASQRSMMRTFIKKTYAAVATGDKAVAQAAFVEMQKVVDRMASKGLIHANKAANHKSKLAAQIKKLA</sequence>
<keyword id="KW-0687">Ribonucleoprotein</keyword>
<keyword id="KW-0689">Ribosomal protein</keyword>
<keyword id="KW-0694">RNA-binding</keyword>
<keyword id="KW-0699">rRNA-binding</keyword>
<proteinExistence type="inferred from homology"/>
<comment type="function">
    <text evidence="1">Binds directly to 16S ribosomal RNA.</text>
</comment>
<comment type="similarity">
    <text evidence="1">Belongs to the bacterial ribosomal protein bS20 family.</text>
</comment>
<protein>
    <recommendedName>
        <fullName evidence="1">Small ribosomal subunit protein bS20</fullName>
    </recommendedName>
    <alternativeName>
        <fullName evidence="3">30S ribosomal protein S20</fullName>
    </alternativeName>
</protein>
<feature type="chain" id="PRO_1000081433" description="Small ribosomal subunit protein bS20">
    <location>
        <begin position="1"/>
        <end position="87"/>
    </location>
</feature>
<feature type="region of interest" description="Disordered" evidence="2">
    <location>
        <begin position="1"/>
        <end position="27"/>
    </location>
</feature>
<feature type="compositionally biased region" description="Basic residues" evidence="2">
    <location>
        <begin position="1"/>
        <end position="11"/>
    </location>
</feature>
<gene>
    <name evidence="1" type="primary">rpsT</name>
    <name type="ordered locus">HSM_0741</name>
</gene>
<name>RS20_HISS2</name>
<accession>B0USI0</accession>
<evidence type="ECO:0000255" key="1">
    <source>
        <dbReference type="HAMAP-Rule" id="MF_00500"/>
    </source>
</evidence>
<evidence type="ECO:0000256" key="2">
    <source>
        <dbReference type="SAM" id="MobiDB-lite"/>
    </source>
</evidence>
<evidence type="ECO:0000305" key="3"/>
<reference key="1">
    <citation type="submission" date="2008-02" db="EMBL/GenBank/DDBJ databases">
        <title>Complete sequence of Haemophilus somnus 2336.</title>
        <authorList>
            <consortium name="US DOE Joint Genome Institute"/>
            <person name="Siddaramappa S."/>
            <person name="Duncan A.J."/>
            <person name="Challacombe J.F."/>
            <person name="Rainey D."/>
            <person name="Gillaspy A.F."/>
            <person name="Carson M."/>
            <person name="Gipson J."/>
            <person name="Gipson M."/>
            <person name="Bruce D."/>
            <person name="Detter J.C."/>
            <person name="Han C.S."/>
            <person name="Land M."/>
            <person name="Tapia R."/>
            <person name="Thompson L.S."/>
            <person name="Orvis J."/>
            <person name="Zaitshik J."/>
            <person name="Barnes G."/>
            <person name="Brettin T.S."/>
            <person name="Dyer D.W."/>
            <person name="Inzana T.J."/>
        </authorList>
    </citation>
    <scope>NUCLEOTIDE SEQUENCE [LARGE SCALE GENOMIC DNA]</scope>
    <source>
        <strain>2336</strain>
    </source>
</reference>
<dbReference type="EMBL" id="CP000947">
    <property type="protein sequence ID" value="ACA32409.1"/>
    <property type="molecule type" value="Genomic_DNA"/>
</dbReference>
<dbReference type="RefSeq" id="WP_011608572.1">
    <property type="nucleotide sequence ID" value="NC_010519.1"/>
</dbReference>
<dbReference type="SMR" id="B0USI0"/>
<dbReference type="STRING" id="228400.HSM_0741"/>
<dbReference type="GeneID" id="31487027"/>
<dbReference type="KEGG" id="hsm:HSM_0741"/>
<dbReference type="HOGENOM" id="CLU_160655_4_0_6"/>
<dbReference type="GO" id="GO:0005829">
    <property type="term" value="C:cytosol"/>
    <property type="evidence" value="ECO:0007669"/>
    <property type="project" value="TreeGrafter"/>
</dbReference>
<dbReference type="GO" id="GO:0015935">
    <property type="term" value="C:small ribosomal subunit"/>
    <property type="evidence" value="ECO:0007669"/>
    <property type="project" value="TreeGrafter"/>
</dbReference>
<dbReference type="GO" id="GO:0070181">
    <property type="term" value="F:small ribosomal subunit rRNA binding"/>
    <property type="evidence" value="ECO:0007669"/>
    <property type="project" value="TreeGrafter"/>
</dbReference>
<dbReference type="GO" id="GO:0003735">
    <property type="term" value="F:structural constituent of ribosome"/>
    <property type="evidence" value="ECO:0007669"/>
    <property type="project" value="InterPro"/>
</dbReference>
<dbReference type="GO" id="GO:0006412">
    <property type="term" value="P:translation"/>
    <property type="evidence" value="ECO:0007669"/>
    <property type="project" value="UniProtKB-UniRule"/>
</dbReference>
<dbReference type="FunFam" id="1.20.58.110:FF:000001">
    <property type="entry name" value="30S ribosomal protein S20"/>
    <property type="match status" value="1"/>
</dbReference>
<dbReference type="Gene3D" id="1.20.58.110">
    <property type="entry name" value="Ribosomal protein S20"/>
    <property type="match status" value="1"/>
</dbReference>
<dbReference type="HAMAP" id="MF_00500">
    <property type="entry name" value="Ribosomal_bS20"/>
    <property type="match status" value="1"/>
</dbReference>
<dbReference type="InterPro" id="IPR002583">
    <property type="entry name" value="Ribosomal_bS20"/>
</dbReference>
<dbReference type="InterPro" id="IPR036510">
    <property type="entry name" value="Ribosomal_bS20_sf"/>
</dbReference>
<dbReference type="NCBIfam" id="TIGR00029">
    <property type="entry name" value="S20"/>
    <property type="match status" value="1"/>
</dbReference>
<dbReference type="PANTHER" id="PTHR33398">
    <property type="entry name" value="30S RIBOSOMAL PROTEIN S20"/>
    <property type="match status" value="1"/>
</dbReference>
<dbReference type="PANTHER" id="PTHR33398:SF1">
    <property type="entry name" value="SMALL RIBOSOMAL SUBUNIT PROTEIN BS20C"/>
    <property type="match status" value="1"/>
</dbReference>
<dbReference type="Pfam" id="PF01649">
    <property type="entry name" value="Ribosomal_S20p"/>
    <property type="match status" value="1"/>
</dbReference>
<dbReference type="SUPFAM" id="SSF46992">
    <property type="entry name" value="Ribosomal protein S20"/>
    <property type="match status" value="1"/>
</dbReference>